<name>CYC11_CLITE</name>
<sequence>GIPCGESCVFIPCTITALLGCSCKDKVCYKN</sequence>
<protein>
    <recommendedName>
        <fullName evidence="3">Cliotide T11</fullName>
    </recommendedName>
</protein>
<reference evidence="4" key="1">
    <citation type="journal article" date="2011" name="J. Biol. Chem.">
        <title>Discovery and characterization of novel cyclotides originated from chimeric precursors consisting of albumin-1 chain a and cyclotide domains in the fabaceae family.</title>
        <authorList>
            <person name="Nguyen G.K."/>
            <person name="Zhang S."/>
            <person name="Nguyen N.T."/>
            <person name="Nguyen P.Q."/>
            <person name="Chiu M.S."/>
            <person name="Hardjojo A."/>
            <person name="Tam J.P."/>
        </authorList>
    </citation>
    <scope>PROTEIN SEQUENCE</scope>
    <scope>PRESENCE OF DISULFIDE BONDS</scope>
    <scope>CYCLIZATION</scope>
    <scope>TISSUE SPECIFICITY</scope>
    <scope>MASS SPECTROMETRY</scope>
    <scope>IDENTIFICATION BY MASS SPECTROMETRY</scope>
</reference>
<evidence type="ECO:0000255" key="1">
    <source>
        <dbReference type="PROSITE-ProRule" id="PRU00395"/>
    </source>
</evidence>
<evidence type="ECO:0000269" key="2">
    <source>
    </source>
</evidence>
<evidence type="ECO:0000303" key="3">
    <source>
    </source>
</evidence>
<evidence type="ECO:0000305" key="4"/>
<evidence type="ECO:0000305" key="5">
    <source>
    </source>
</evidence>
<feature type="peptide" id="PRO_0000440065" description="Cliotide T11" evidence="2">
    <location>
        <begin position="1"/>
        <end position="31"/>
    </location>
</feature>
<feature type="disulfide bond" evidence="1">
    <location>
        <begin position="4"/>
        <end position="21"/>
    </location>
</feature>
<feature type="disulfide bond" evidence="1">
    <location>
        <begin position="8"/>
        <end position="23"/>
    </location>
</feature>
<feature type="disulfide bond" evidence="1">
    <location>
        <begin position="13"/>
        <end position="28"/>
    </location>
</feature>
<feature type="cross-link" description="Cyclopeptide (Gly-Asn)" evidence="3">
    <location>
        <begin position="1"/>
        <end position="31"/>
    </location>
</feature>
<organism evidence="3">
    <name type="scientific">Clitoria ternatea</name>
    <name type="common">Butterfly pea</name>
    <dbReference type="NCBI Taxonomy" id="43366"/>
    <lineage>
        <taxon>Eukaryota</taxon>
        <taxon>Viridiplantae</taxon>
        <taxon>Streptophyta</taxon>
        <taxon>Embryophyta</taxon>
        <taxon>Tracheophyta</taxon>
        <taxon>Spermatophyta</taxon>
        <taxon>Magnoliopsida</taxon>
        <taxon>eudicotyledons</taxon>
        <taxon>Gunneridae</taxon>
        <taxon>Pentapetalae</taxon>
        <taxon>rosids</taxon>
        <taxon>fabids</taxon>
        <taxon>Fabales</taxon>
        <taxon>Fabaceae</taxon>
        <taxon>Papilionoideae</taxon>
        <taxon>50 kb inversion clade</taxon>
        <taxon>NPAAA clade</taxon>
        <taxon>indigoferoid/millettioid clade</taxon>
        <taxon>Phaseoleae</taxon>
        <taxon>Clitoria</taxon>
    </lineage>
</organism>
<dbReference type="SMR" id="C0HKG3"/>
<dbReference type="GO" id="GO:0006952">
    <property type="term" value="P:defense response"/>
    <property type="evidence" value="ECO:0007669"/>
    <property type="project" value="UniProtKB-KW"/>
</dbReference>
<dbReference type="InterPro" id="IPR005535">
    <property type="entry name" value="Cyclotide"/>
</dbReference>
<dbReference type="InterPro" id="IPR012323">
    <property type="entry name" value="Cyclotide_bracelet_CS"/>
</dbReference>
<dbReference type="InterPro" id="IPR036146">
    <property type="entry name" value="Cyclotide_sf"/>
</dbReference>
<dbReference type="Pfam" id="PF03784">
    <property type="entry name" value="Cyclotide"/>
    <property type="match status" value="1"/>
</dbReference>
<dbReference type="PIRSF" id="PIRSF037891">
    <property type="entry name" value="Cycloviolacin"/>
    <property type="match status" value="1"/>
</dbReference>
<dbReference type="SUPFAM" id="SSF57038">
    <property type="entry name" value="Cyclotides"/>
    <property type="match status" value="1"/>
</dbReference>
<dbReference type="PROSITE" id="PS51052">
    <property type="entry name" value="CYCLOTIDE"/>
    <property type="match status" value="1"/>
</dbReference>
<dbReference type="PROSITE" id="PS60008">
    <property type="entry name" value="CYCLOTIDE_BRACELET"/>
    <property type="match status" value="1"/>
</dbReference>
<proteinExistence type="evidence at protein level"/>
<accession>C0HKG3</accession>
<comment type="function">
    <text evidence="1">Probably participates in a plant defense mechanism.</text>
</comment>
<comment type="tissue specificity">
    <text evidence="2">Expressed in seed but not in root, nodule, flower, stem, shoot, leaf and pod (at protein level).</text>
</comment>
<comment type="domain">
    <text evidence="4">The presence of a 'disulfide through disulfide knot' structurally defines this protein as a knottin.</text>
</comment>
<comment type="PTM">
    <text evidence="2">Contains 3 disulfide bonds.</text>
</comment>
<comment type="PTM">
    <text evidence="1 2">This is a cyclic peptide.</text>
</comment>
<comment type="mass spectrometry"/>
<comment type="similarity">
    <text evidence="1">Belongs to the cyclotide family. Bracelet subfamily.</text>
</comment>
<comment type="caution">
    <text evidence="5">This peptide is cyclic. The start position was chosen by similarity to cliotide T1 for which the DNA sequence is known.</text>
</comment>
<keyword id="KW-0903">Direct protein sequencing</keyword>
<keyword id="KW-1015">Disulfide bond</keyword>
<keyword id="KW-0960">Knottin</keyword>
<keyword id="KW-0611">Plant defense</keyword>